<name>SMRB_ECO27</name>
<organism>
    <name type="scientific">Escherichia coli O127:H6 (strain E2348/69 / EPEC)</name>
    <dbReference type="NCBI Taxonomy" id="574521"/>
    <lineage>
        <taxon>Bacteria</taxon>
        <taxon>Pseudomonadati</taxon>
        <taxon>Pseudomonadota</taxon>
        <taxon>Gammaproteobacteria</taxon>
        <taxon>Enterobacterales</taxon>
        <taxon>Enterobacteriaceae</taxon>
        <taxon>Escherichia</taxon>
    </lineage>
</organism>
<reference key="1">
    <citation type="journal article" date="2009" name="J. Bacteriol.">
        <title>Complete genome sequence and comparative genome analysis of enteropathogenic Escherichia coli O127:H6 strain E2348/69.</title>
        <authorList>
            <person name="Iguchi A."/>
            <person name="Thomson N.R."/>
            <person name="Ogura Y."/>
            <person name="Saunders D."/>
            <person name="Ooka T."/>
            <person name="Henderson I.R."/>
            <person name="Harris D."/>
            <person name="Asadulghani M."/>
            <person name="Kurokawa K."/>
            <person name="Dean P."/>
            <person name="Kenny B."/>
            <person name="Quail M.A."/>
            <person name="Thurston S."/>
            <person name="Dougan G."/>
            <person name="Hayashi T."/>
            <person name="Parkhill J."/>
            <person name="Frankel G."/>
        </authorList>
    </citation>
    <scope>NUCLEOTIDE SEQUENCE [LARGE SCALE GENOMIC DNA]</scope>
    <source>
        <strain>E2348/69 / EPEC</strain>
    </source>
</reference>
<feature type="chain" id="PRO_1000149554" description="Ribosome rescue factor SmrB">
    <location>
        <begin position="1"/>
        <end position="183"/>
    </location>
</feature>
<feature type="domain" description="Smr" evidence="1">
    <location>
        <begin position="98"/>
        <end position="173"/>
    </location>
</feature>
<keyword id="KW-0255">Endonuclease</keyword>
<keyword id="KW-0378">Hydrolase</keyword>
<keyword id="KW-0540">Nuclease</keyword>
<keyword id="KW-1185">Reference proteome</keyword>
<keyword id="KW-0694">RNA-binding</keyword>
<keyword id="KW-0699">rRNA-binding</keyword>
<dbReference type="EC" id="3.1.-.-" evidence="1"/>
<dbReference type="EMBL" id="FM180568">
    <property type="protein sequence ID" value="CAS10019.1"/>
    <property type="molecule type" value="Genomic_DNA"/>
</dbReference>
<dbReference type="RefSeq" id="WP_000730806.1">
    <property type="nucleotide sequence ID" value="NC_011601.1"/>
</dbReference>
<dbReference type="SMR" id="B7UFY9"/>
<dbReference type="GeneID" id="93774844"/>
<dbReference type="KEGG" id="ecg:E2348C_2471"/>
<dbReference type="HOGENOM" id="CLU_055978_4_0_6"/>
<dbReference type="Proteomes" id="UP000008205">
    <property type="component" value="Chromosome"/>
</dbReference>
<dbReference type="GO" id="GO:0004521">
    <property type="term" value="F:RNA endonuclease activity"/>
    <property type="evidence" value="ECO:0007669"/>
    <property type="project" value="UniProtKB-UniRule"/>
</dbReference>
<dbReference type="GO" id="GO:0019843">
    <property type="term" value="F:rRNA binding"/>
    <property type="evidence" value="ECO:0007669"/>
    <property type="project" value="UniProtKB-UniRule"/>
</dbReference>
<dbReference type="GO" id="GO:0072344">
    <property type="term" value="P:rescue of stalled ribosome"/>
    <property type="evidence" value="ECO:0007669"/>
    <property type="project" value="UniProtKB-UniRule"/>
</dbReference>
<dbReference type="Gene3D" id="3.30.1370.110">
    <property type="match status" value="1"/>
</dbReference>
<dbReference type="HAMAP" id="MF_01042">
    <property type="entry name" value="SmrB"/>
    <property type="match status" value="1"/>
</dbReference>
<dbReference type="InterPro" id="IPR002625">
    <property type="entry name" value="Smr_dom"/>
</dbReference>
<dbReference type="InterPro" id="IPR036063">
    <property type="entry name" value="Smr_dom_sf"/>
</dbReference>
<dbReference type="InterPro" id="IPR022990">
    <property type="entry name" value="SmrB-like"/>
</dbReference>
<dbReference type="NCBIfam" id="NF003432">
    <property type="entry name" value="PRK04946.1"/>
    <property type="match status" value="1"/>
</dbReference>
<dbReference type="PANTHER" id="PTHR35562">
    <property type="entry name" value="DNA ENDONUCLEASE SMRA-RELATED"/>
    <property type="match status" value="1"/>
</dbReference>
<dbReference type="PANTHER" id="PTHR35562:SF1">
    <property type="entry name" value="UPF0115 PROTEIN YFCN"/>
    <property type="match status" value="1"/>
</dbReference>
<dbReference type="Pfam" id="PF01713">
    <property type="entry name" value="Smr"/>
    <property type="match status" value="1"/>
</dbReference>
<dbReference type="SMART" id="SM00463">
    <property type="entry name" value="SMR"/>
    <property type="match status" value="1"/>
</dbReference>
<dbReference type="SUPFAM" id="SSF160443">
    <property type="entry name" value="SMR domain-like"/>
    <property type="match status" value="1"/>
</dbReference>
<dbReference type="PROSITE" id="PS50828">
    <property type="entry name" value="SMR"/>
    <property type="match status" value="1"/>
</dbReference>
<comment type="function">
    <text evidence="1">Acts as a ribosome collision sensor. Detects stalled/collided disomes (pairs of ribosomes where the leading ribosome is stalled and a second ribosome has collided with it) and endonucleolytically cleaves mRNA at the 5' boundary of the stalled ribosome. Stalled/collided disomes form a new interface (primarily via the 30S subunits) that binds SmrB. Cleaved mRNA becomes available for tmRNA ligation, leading to ribosomal subunit dissociation and rescue of stalled ribosomes.</text>
</comment>
<comment type="subunit">
    <text evidence="1">Associates with collided ribosomes, but not with correctly translating polysomes.</text>
</comment>
<comment type="similarity">
    <text evidence="1">Belongs to the SmrB family.</text>
</comment>
<sequence length="183" mass="21013">MKKKTTLSEEDQALFRQLMAGTRKIKQDTIVHRPQRKKISEVPVKRLIQEQADASHYFSDEFQPLLNTEGPVKYVRPDVSHFEAKKLRRGDYSPELFLDLHGLTQLQAKQELGALIAACRREHVFCACVMHGHGKHILKQQTPLWLAQHPHVMAFHQAPKEYGGDAALLVLIEVEEWLPPELP</sequence>
<proteinExistence type="inferred from homology"/>
<evidence type="ECO:0000255" key="1">
    <source>
        <dbReference type="HAMAP-Rule" id="MF_01042"/>
    </source>
</evidence>
<gene>
    <name evidence="1" type="primary">smrB</name>
    <name type="ordered locus">E2348C_2471</name>
</gene>
<accession>B7UFY9</accession>
<protein>
    <recommendedName>
        <fullName evidence="1">Ribosome rescue factor SmrB</fullName>
        <ecNumber evidence="1">3.1.-.-</ecNumber>
    </recommendedName>
</protein>